<keyword id="KW-0032">Aminotransferase</keyword>
<keyword id="KW-1185">Reference proteome</keyword>
<keyword id="KW-0808">Transferase</keyword>
<protein>
    <recommendedName>
        <fullName evidence="1">Aminomethyltransferase</fullName>
        <ecNumber evidence="1">2.1.2.10</ecNumber>
    </recommendedName>
    <alternativeName>
        <fullName evidence="1">Glycine cleavage system T protein</fullName>
    </alternativeName>
</protein>
<proteinExistence type="inferred from homology"/>
<reference key="1">
    <citation type="submission" date="2007-03" db="EMBL/GenBank/DDBJ databases">
        <title>Complete sequence of Desulfotomaculum reducens MI-1.</title>
        <authorList>
            <consortium name="US DOE Joint Genome Institute"/>
            <person name="Copeland A."/>
            <person name="Lucas S."/>
            <person name="Lapidus A."/>
            <person name="Barry K."/>
            <person name="Detter J.C."/>
            <person name="Glavina del Rio T."/>
            <person name="Hammon N."/>
            <person name="Israni S."/>
            <person name="Dalin E."/>
            <person name="Tice H."/>
            <person name="Pitluck S."/>
            <person name="Sims D."/>
            <person name="Brettin T."/>
            <person name="Bruce D."/>
            <person name="Han C."/>
            <person name="Tapia R."/>
            <person name="Schmutz J."/>
            <person name="Larimer F."/>
            <person name="Land M."/>
            <person name="Hauser L."/>
            <person name="Kyrpides N."/>
            <person name="Kim E."/>
            <person name="Tebo B.M."/>
            <person name="Richardson P."/>
        </authorList>
    </citation>
    <scope>NUCLEOTIDE SEQUENCE [LARGE SCALE GENOMIC DNA]</scope>
    <source>
        <strain>ATCC BAA-1160 / DSM 100696 / MI-1</strain>
    </source>
</reference>
<gene>
    <name evidence="1" type="primary">gcvT</name>
    <name type="ordered locus">Dred_0720</name>
</gene>
<name>GCST_DESRM</name>
<dbReference type="EC" id="2.1.2.10" evidence="1"/>
<dbReference type="EMBL" id="CP000612">
    <property type="protein sequence ID" value="ABO49259.1"/>
    <property type="molecule type" value="Genomic_DNA"/>
</dbReference>
<dbReference type="RefSeq" id="WP_011877095.1">
    <property type="nucleotide sequence ID" value="NC_009253.1"/>
</dbReference>
<dbReference type="SMR" id="A4J2F6"/>
<dbReference type="STRING" id="349161.Dred_0720"/>
<dbReference type="KEGG" id="drm:Dred_0720"/>
<dbReference type="eggNOG" id="COG0404">
    <property type="taxonomic scope" value="Bacteria"/>
</dbReference>
<dbReference type="HOGENOM" id="CLU_007884_10_2_9"/>
<dbReference type="OrthoDB" id="9774591at2"/>
<dbReference type="Proteomes" id="UP000001556">
    <property type="component" value="Chromosome"/>
</dbReference>
<dbReference type="GO" id="GO:0005829">
    <property type="term" value="C:cytosol"/>
    <property type="evidence" value="ECO:0007669"/>
    <property type="project" value="TreeGrafter"/>
</dbReference>
<dbReference type="GO" id="GO:0005960">
    <property type="term" value="C:glycine cleavage complex"/>
    <property type="evidence" value="ECO:0007669"/>
    <property type="project" value="InterPro"/>
</dbReference>
<dbReference type="GO" id="GO:0004047">
    <property type="term" value="F:aminomethyltransferase activity"/>
    <property type="evidence" value="ECO:0007669"/>
    <property type="project" value="UniProtKB-UniRule"/>
</dbReference>
<dbReference type="GO" id="GO:0008483">
    <property type="term" value="F:transaminase activity"/>
    <property type="evidence" value="ECO:0007669"/>
    <property type="project" value="UniProtKB-KW"/>
</dbReference>
<dbReference type="GO" id="GO:0019464">
    <property type="term" value="P:glycine decarboxylation via glycine cleavage system"/>
    <property type="evidence" value="ECO:0007669"/>
    <property type="project" value="UniProtKB-UniRule"/>
</dbReference>
<dbReference type="FunFam" id="2.40.30.110:FF:000003">
    <property type="entry name" value="Aminomethyltransferase"/>
    <property type="match status" value="1"/>
</dbReference>
<dbReference type="FunFam" id="3.30.70.1400:FF:000001">
    <property type="entry name" value="Aminomethyltransferase"/>
    <property type="match status" value="1"/>
</dbReference>
<dbReference type="FunFam" id="4.10.1250.10:FF:000001">
    <property type="entry name" value="Aminomethyltransferase"/>
    <property type="match status" value="1"/>
</dbReference>
<dbReference type="Gene3D" id="2.40.30.110">
    <property type="entry name" value="Aminomethyltransferase beta-barrel domains"/>
    <property type="match status" value="1"/>
</dbReference>
<dbReference type="Gene3D" id="3.30.70.1400">
    <property type="entry name" value="Aminomethyltransferase beta-barrel domains"/>
    <property type="match status" value="1"/>
</dbReference>
<dbReference type="Gene3D" id="4.10.1250.10">
    <property type="entry name" value="Aminomethyltransferase fragment"/>
    <property type="match status" value="1"/>
</dbReference>
<dbReference type="Gene3D" id="3.30.1360.120">
    <property type="entry name" value="Probable tRNA modification gtpase trme, domain 1"/>
    <property type="match status" value="1"/>
</dbReference>
<dbReference type="HAMAP" id="MF_00259">
    <property type="entry name" value="GcvT"/>
    <property type="match status" value="1"/>
</dbReference>
<dbReference type="InterPro" id="IPR006223">
    <property type="entry name" value="GCS_T"/>
</dbReference>
<dbReference type="InterPro" id="IPR022903">
    <property type="entry name" value="GCS_T_bac"/>
</dbReference>
<dbReference type="InterPro" id="IPR013977">
    <property type="entry name" value="GCST_C"/>
</dbReference>
<dbReference type="InterPro" id="IPR006222">
    <property type="entry name" value="GCV_T_N"/>
</dbReference>
<dbReference type="InterPro" id="IPR028896">
    <property type="entry name" value="GcvT/YgfZ/DmdA"/>
</dbReference>
<dbReference type="InterPro" id="IPR029043">
    <property type="entry name" value="GcvT/YgfZ_C"/>
</dbReference>
<dbReference type="InterPro" id="IPR027266">
    <property type="entry name" value="TrmE/GcvT_dom1"/>
</dbReference>
<dbReference type="NCBIfam" id="TIGR00528">
    <property type="entry name" value="gcvT"/>
    <property type="match status" value="1"/>
</dbReference>
<dbReference type="NCBIfam" id="NF001567">
    <property type="entry name" value="PRK00389.1"/>
    <property type="match status" value="1"/>
</dbReference>
<dbReference type="PANTHER" id="PTHR43757">
    <property type="entry name" value="AMINOMETHYLTRANSFERASE"/>
    <property type="match status" value="1"/>
</dbReference>
<dbReference type="PANTHER" id="PTHR43757:SF2">
    <property type="entry name" value="AMINOMETHYLTRANSFERASE, MITOCHONDRIAL"/>
    <property type="match status" value="1"/>
</dbReference>
<dbReference type="Pfam" id="PF01571">
    <property type="entry name" value="GCV_T"/>
    <property type="match status" value="1"/>
</dbReference>
<dbReference type="Pfam" id="PF08669">
    <property type="entry name" value="GCV_T_C"/>
    <property type="match status" value="1"/>
</dbReference>
<dbReference type="PIRSF" id="PIRSF006487">
    <property type="entry name" value="GcvT"/>
    <property type="match status" value="1"/>
</dbReference>
<dbReference type="SUPFAM" id="SSF101790">
    <property type="entry name" value="Aminomethyltransferase beta-barrel domain"/>
    <property type="match status" value="1"/>
</dbReference>
<dbReference type="SUPFAM" id="SSF103025">
    <property type="entry name" value="Folate-binding domain"/>
    <property type="match status" value="1"/>
</dbReference>
<feature type="chain" id="PRO_1000071885" description="Aminomethyltransferase">
    <location>
        <begin position="1"/>
        <end position="364"/>
    </location>
</feature>
<comment type="function">
    <text evidence="1">The glycine cleavage system catalyzes the degradation of glycine.</text>
</comment>
<comment type="catalytic activity">
    <reaction evidence="1">
        <text>N(6)-[(R)-S(8)-aminomethyldihydrolipoyl]-L-lysyl-[protein] + (6S)-5,6,7,8-tetrahydrofolate = N(6)-[(R)-dihydrolipoyl]-L-lysyl-[protein] + (6R)-5,10-methylene-5,6,7,8-tetrahydrofolate + NH4(+)</text>
        <dbReference type="Rhea" id="RHEA:16945"/>
        <dbReference type="Rhea" id="RHEA-COMP:10475"/>
        <dbReference type="Rhea" id="RHEA-COMP:10492"/>
        <dbReference type="ChEBI" id="CHEBI:15636"/>
        <dbReference type="ChEBI" id="CHEBI:28938"/>
        <dbReference type="ChEBI" id="CHEBI:57453"/>
        <dbReference type="ChEBI" id="CHEBI:83100"/>
        <dbReference type="ChEBI" id="CHEBI:83143"/>
        <dbReference type="EC" id="2.1.2.10"/>
    </reaction>
</comment>
<comment type="subunit">
    <text evidence="1">The glycine cleavage system is composed of four proteins: P, T, L and H.</text>
</comment>
<comment type="similarity">
    <text evidence="1">Belongs to the GcvT family.</text>
</comment>
<evidence type="ECO:0000255" key="1">
    <source>
        <dbReference type="HAMAP-Rule" id="MF_00259"/>
    </source>
</evidence>
<accession>A4J2F6</accession>
<organism>
    <name type="scientific">Desulforamulus reducens (strain ATCC BAA-1160 / DSM 100696 / MI-1)</name>
    <name type="common">Desulfotomaculum reducens</name>
    <dbReference type="NCBI Taxonomy" id="349161"/>
    <lineage>
        <taxon>Bacteria</taxon>
        <taxon>Bacillati</taxon>
        <taxon>Bacillota</taxon>
        <taxon>Clostridia</taxon>
        <taxon>Eubacteriales</taxon>
        <taxon>Peptococcaceae</taxon>
        <taxon>Desulforamulus</taxon>
    </lineage>
</organism>
<sequence length="364" mass="40239">MQELKRTPLYNIHLAAGAKMVEFGGWLMPVQYEGIIAEHQAVRSAAGLFDVSHMGEIQISGPTAREFVQRLVTNDISRLKPGCAIYSPMCNPQGGTVDDLLVYQLEDQQYLLVVNASNTDKDFHWIVSQQVPGVEIQNVSEVTCQLALQGPQAEKILQRLTAVDLSHIKSFCFVYGAVEGIHCLISRTGYTGEAGFELYFPASHAERVWQAIMATGATDGLRPVGLGARDTLRFEACLALYGHELTDDISPLMAGLGWTVKFNKPEFVGKEPLLKQKEAGTTYQLVGLEMIDRGIPRQGYAIFKEGQEVGWITSGTFAPTLGKNMGLGYVEIPFADVGKELNIMVRNKPLKARIVKKPFYKREV</sequence>